<name>YICS_SHIBS</name>
<organism>
    <name type="scientific">Shigella boydii serotype 4 (strain Sb227)</name>
    <dbReference type="NCBI Taxonomy" id="300268"/>
    <lineage>
        <taxon>Bacteria</taxon>
        <taxon>Pseudomonadati</taxon>
        <taxon>Pseudomonadota</taxon>
        <taxon>Gammaproteobacteria</taxon>
        <taxon>Enterobacterales</taxon>
        <taxon>Enterobacteriaceae</taxon>
        <taxon>Shigella</taxon>
    </lineage>
</organism>
<proteinExistence type="predicted"/>
<gene>
    <name type="primary">yicS</name>
    <name type="ordered locus">SBO_3710</name>
</gene>
<protein>
    <recommendedName>
        <fullName>Uncharacterized protein YicS</fullName>
    </recommendedName>
</protein>
<reference key="1">
    <citation type="journal article" date="2005" name="Nucleic Acids Res.">
        <title>Genome dynamics and diversity of Shigella species, the etiologic agents of bacillary dysentery.</title>
        <authorList>
            <person name="Yang F."/>
            <person name="Yang J."/>
            <person name="Zhang X."/>
            <person name="Chen L."/>
            <person name="Jiang Y."/>
            <person name="Yan Y."/>
            <person name="Tang X."/>
            <person name="Wang J."/>
            <person name="Xiong Z."/>
            <person name="Dong J."/>
            <person name="Xue Y."/>
            <person name="Zhu Y."/>
            <person name="Xu X."/>
            <person name="Sun L."/>
            <person name="Chen S."/>
            <person name="Nie H."/>
            <person name="Peng J."/>
            <person name="Xu J."/>
            <person name="Wang Y."/>
            <person name="Yuan Z."/>
            <person name="Wen Y."/>
            <person name="Yao Z."/>
            <person name="Shen Y."/>
            <person name="Qiang B."/>
            <person name="Hou Y."/>
            <person name="Yu J."/>
            <person name="Jin Q."/>
        </authorList>
    </citation>
    <scope>NUCLEOTIDE SEQUENCE [LARGE SCALE GENOMIC DNA]</scope>
    <source>
        <strain>Sb227</strain>
    </source>
</reference>
<dbReference type="EMBL" id="CP000036">
    <property type="protein sequence ID" value="ABB68185.1"/>
    <property type="molecule type" value="Genomic_DNA"/>
</dbReference>
<dbReference type="RefSeq" id="WP_000805509.1">
    <property type="nucleotide sequence ID" value="NC_007613.1"/>
</dbReference>
<dbReference type="SMR" id="Q31US3"/>
<dbReference type="GeneID" id="93778401"/>
<dbReference type="KEGG" id="sbo:SBO_3710"/>
<dbReference type="HOGENOM" id="CLU_159877_2_0_6"/>
<dbReference type="Proteomes" id="UP000007067">
    <property type="component" value="Chromosome"/>
</dbReference>
<dbReference type="InterPro" id="IPR048144">
    <property type="entry name" value="YicS_fam"/>
</dbReference>
<dbReference type="NCBIfam" id="NF041639">
    <property type="entry name" value="YicS_fam"/>
    <property type="match status" value="1"/>
</dbReference>
<accession>Q31US3</accession>
<sequence>MKPTTLLLIFTFFAMPGIVYAESPFSSLQSAKEKTTVLQDLRKICTPQASLSDEAWEKLMLSDENNKQHIREAIVAMERNNQSNYWEALGKVECPDM</sequence>
<feature type="chain" id="PRO_0000262302" description="Uncharacterized protein YicS">
    <location>
        <begin position="1"/>
        <end position="97"/>
    </location>
</feature>